<sequence>MFNQHSVEIDWGGRPLKLETGKIARQADGAVVATYGETVVLATVVAAKSPREGVDFLPLTVDYQEKTYAAGRIPGGYFKREGRPTEKETLVSRLIDRPVRPLFADGWRNETQVIVTVLSHDMENDPDILAMVAASAALTLSGAPFKGPIGAARVGFINDEYVLNPTLDEIVDTQLDLVVAGTADAVLMVESEAKELSEEIMLKAVMFGHRHFQPVIDAIIELAEKAAKEPRELKVIDDTEIEKEMLGLVEQDLRAAYAIPVKQDRYAAVGKVKEKALAHFFPEGQEPKYDKLRVAGVFKELEAKIVRWNILDTGKRIDGRDVKTVRNIVAEAGVLPRAHGSALFTRGETQAMVVTTLGTGEDEQYIDSLAGTYKETFLLHYNFPPYSVGETGRLGGAKRREIGHGKLAWRAIRPVLPPHHEFPYTIRVVSEITESNGSSSMASVCGASLSLMDAGVPLKRPTAGIAMGLILEGERYAVLSDILGDEDHLGDMDFKVAGTEAGITSLQMDIKIAGITEEIMKVALGQAKDGRIHILGEMSKALDRARAELGEHAPRIETFKIPTDKIREVIGTGGKVIREIVEKTGAKVNIEDDGTVKVASSDGESIKAAIKWIKSIASDPEVGEIYEGTVVKVMEFGAFVNFFGAKDGLVHISQLAAGRVQKTSDVVKEGAKVKVKLLGFDDRGKTRLSMKVVDQETGEDLEAKQKAEGDAPREAAGE</sequence>
<proteinExistence type="inferred from homology"/>
<gene>
    <name evidence="1" type="primary">pnp</name>
    <name type="ordered locus">Nwi_0028</name>
</gene>
<accession>Q3SWP5</accession>
<evidence type="ECO:0000255" key="1">
    <source>
        <dbReference type="HAMAP-Rule" id="MF_01595"/>
    </source>
</evidence>
<evidence type="ECO:0000256" key="2">
    <source>
        <dbReference type="SAM" id="MobiDB-lite"/>
    </source>
</evidence>
<keyword id="KW-0963">Cytoplasm</keyword>
<keyword id="KW-0460">Magnesium</keyword>
<keyword id="KW-0479">Metal-binding</keyword>
<keyword id="KW-0548">Nucleotidyltransferase</keyword>
<keyword id="KW-1185">Reference proteome</keyword>
<keyword id="KW-0694">RNA-binding</keyword>
<keyword id="KW-0808">Transferase</keyword>
<feature type="chain" id="PRO_0000329735" description="Polyribonucleotide nucleotidyltransferase">
    <location>
        <begin position="1"/>
        <end position="718"/>
    </location>
</feature>
<feature type="domain" description="KH" evidence="1">
    <location>
        <begin position="554"/>
        <end position="613"/>
    </location>
</feature>
<feature type="domain" description="S1 motif" evidence="1">
    <location>
        <begin position="623"/>
        <end position="691"/>
    </location>
</feature>
<feature type="region of interest" description="Disordered" evidence="2">
    <location>
        <begin position="692"/>
        <end position="718"/>
    </location>
</feature>
<feature type="compositionally biased region" description="Basic and acidic residues" evidence="2">
    <location>
        <begin position="701"/>
        <end position="718"/>
    </location>
</feature>
<feature type="binding site" evidence="1">
    <location>
        <position position="487"/>
    </location>
    <ligand>
        <name>Mg(2+)</name>
        <dbReference type="ChEBI" id="CHEBI:18420"/>
    </ligand>
</feature>
<feature type="binding site" evidence="1">
    <location>
        <position position="493"/>
    </location>
    <ligand>
        <name>Mg(2+)</name>
        <dbReference type="ChEBI" id="CHEBI:18420"/>
    </ligand>
</feature>
<name>PNP_NITWN</name>
<protein>
    <recommendedName>
        <fullName evidence="1">Polyribonucleotide nucleotidyltransferase</fullName>
        <ecNumber evidence="1">2.7.7.8</ecNumber>
    </recommendedName>
    <alternativeName>
        <fullName evidence="1">Polynucleotide phosphorylase</fullName>
        <shortName evidence="1">PNPase</shortName>
    </alternativeName>
</protein>
<reference key="1">
    <citation type="journal article" date="2006" name="Appl. Environ. Microbiol.">
        <title>Genome sequence of the chemolithoautotrophic nitrite-oxidizing bacterium Nitrobacter winogradskyi Nb-255.</title>
        <authorList>
            <person name="Starkenburg S.R."/>
            <person name="Chain P.S.G."/>
            <person name="Sayavedra-Soto L.A."/>
            <person name="Hauser L."/>
            <person name="Land M.L."/>
            <person name="Larimer F.W."/>
            <person name="Malfatti S.A."/>
            <person name="Klotz M.G."/>
            <person name="Bottomley P.J."/>
            <person name="Arp D.J."/>
            <person name="Hickey W.J."/>
        </authorList>
    </citation>
    <scope>NUCLEOTIDE SEQUENCE [LARGE SCALE GENOMIC DNA]</scope>
    <source>
        <strain>ATCC 25391 / DSM 10237 / CIP 104748 / NCIMB 11846 / Nb-255</strain>
    </source>
</reference>
<dbReference type="EC" id="2.7.7.8" evidence="1"/>
<dbReference type="EMBL" id="CP000115">
    <property type="protein sequence ID" value="ABA03296.1"/>
    <property type="molecule type" value="Genomic_DNA"/>
</dbReference>
<dbReference type="RefSeq" id="WP_011313367.1">
    <property type="nucleotide sequence ID" value="NC_007406.1"/>
</dbReference>
<dbReference type="SMR" id="Q3SWP5"/>
<dbReference type="STRING" id="323098.Nwi_0028"/>
<dbReference type="KEGG" id="nwi:Nwi_0028"/>
<dbReference type="eggNOG" id="COG1185">
    <property type="taxonomic scope" value="Bacteria"/>
</dbReference>
<dbReference type="HOGENOM" id="CLU_004217_2_2_5"/>
<dbReference type="OrthoDB" id="9804305at2"/>
<dbReference type="Proteomes" id="UP000002531">
    <property type="component" value="Chromosome"/>
</dbReference>
<dbReference type="GO" id="GO:0005829">
    <property type="term" value="C:cytosol"/>
    <property type="evidence" value="ECO:0007669"/>
    <property type="project" value="TreeGrafter"/>
</dbReference>
<dbReference type="GO" id="GO:0000175">
    <property type="term" value="F:3'-5'-RNA exonuclease activity"/>
    <property type="evidence" value="ECO:0007669"/>
    <property type="project" value="TreeGrafter"/>
</dbReference>
<dbReference type="GO" id="GO:0000287">
    <property type="term" value="F:magnesium ion binding"/>
    <property type="evidence" value="ECO:0007669"/>
    <property type="project" value="UniProtKB-UniRule"/>
</dbReference>
<dbReference type="GO" id="GO:0004654">
    <property type="term" value="F:polyribonucleotide nucleotidyltransferase activity"/>
    <property type="evidence" value="ECO:0007669"/>
    <property type="project" value="UniProtKB-UniRule"/>
</dbReference>
<dbReference type="GO" id="GO:0003723">
    <property type="term" value="F:RNA binding"/>
    <property type="evidence" value="ECO:0007669"/>
    <property type="project" value="UniProtKB-UniRule"/>
</dbReference>
<dbReference type="GO" id="GO:0006402">
    <property type="term" value="P:mRNA catabolic process"/>
    <property type="evidence" value="ECO:0007669"/>
    <property type="project" value="UniProtKB-UniRule"/>
</dbReference>
<dbReference type="GO" id="GO:0006396">
    <property type="term" value="P:RNA processing"/>
    <property type="evidence" value="ECO:0007669"/>
    <property type="project" value="InterPro"/>
</dbReference>
<dbReference type="CDD" id="cd02393">
    <property type="entry name" value="KH-I_PNPase"/>
    <property type="match status" value="1"/>
</dbReference>
<dbReference type="CDD" id="cd11363">
    <property type="entry name" value="RNase_PH_PNPase_1"/>
    <property type="match status" value="1"/>
</dbReference>
<dbReference type="CDD" id="cd11364">
    <property type="entry name" value="RNase_PH_PNPase_2"/>
    <property type="match status" value="1"/>
</dbReference>
<dbReference type="CDD" id="cd04472">
    <property type="entry name" value="S1_PNPase"/>
    <property type="match status" value="1"/>
</dbReference>
<dbReference type="FunFam" id="2.40.50.140:FF:000107">
    <property type="entry name" value="Polyribonucleotide nucleotidyltransferase"/>
    <property type="match status" value="1"/>
</dbReference>
<dbReference type="FunFam" id="3.30.1370.10:FF:000001">
    <property type="entry name" value="Polyribonucleotide nucleotidyltransferase"/>
    <property type="match status" value="1"/>
</dbReference>
<dbReference type="FunFam" id="3.30.230.70:FF:000001">
    <property type="entry name" value="Polyribonucleotide nucleotidyltransferase"/>
    <property type="match status" value="1"/>
</dbReference>
<dbReference type="FunFam" id="3.30.230.70:FF:000002">
    <property type="entry name" value="Polyribonucleotide nucleotidyltransferase"/>
    <property type="match status" value="1"/>
</dbReference>
<dbReference type="Gene3D" id="3.30.230.70">
    <property type="entry name" value="GHMP Kinase, N-terminal domain"/>
    <property type="match status" value="2"/>
</dbReference>
<dbReference type="Gene3D" id="3.30.1370.10">
    <property type="entry name" value="K Homology domain, type 1"/>
    <property type="match status" value="1"/>
</dbReference>
<dbReference type="Gene3D" id="2.40.50.140">
    <property type="entry name" value="Nucleic acid-binding proteins"/>
    <property type="match status" value="1"/>
</dbReference>
<dbReference type="HAMAP" id="MF_01595">
    <property type="entry name" value="PNPase"/>
    <property type="match status" value="1"/>
</dbReference>
<dbReference type="InterPro" id="IPR001247">
    <property type="entry name" value="ExoRNase_PH_dom1"/>
</dbReference>
<dbReference type="InterPro" id="IPR015847">
    <property type="entry name" value="ExoRNase_PH_dom2"/>
</dbReference>
<dbReference type="InterPro" id="IPR036345">
    <property type="entry name" value="ExoRNase_PH_dom2_sf"/>
</dbReference>
<dbReference type="InterPro" id="IPR004087">
    <property type="entry name" value="KH_dom"/>
</dbReference>
<dbReference type="InterPro" id="IPR004088">
    <property type="entry name" value="KH_dom_type_1"/>
</dbReference>
<dbReference type="InterPro" id="IPR036612">
    <property type="entry name" value="KH_dom_type_1_sf"/>
</dbReference>
<dbReference type="InterPro" id="IPR012340">
    <property type="entry name" value="NA-bd_OB-fold"/>
</dbReference>
<dbReference type="InterPro" id="IPR012162">
    <property type="entry name" value="PNPase"/>
</dbReference>
<dbReference type="InterPro" id="IPR027408">
    <property type="entry name" value="PNPase/RNase_PH_dom_sf"/>
</dbReference>
<dbReference type="InterPro" id="IPR015848">
    <property type="entry name" value="PNPase_PH_RNA-bd_bac/org-type"/>
</dbReference>
<dbReference type="InterPro" id="IPR036456">
    <property type="entry name" value="PNPase_PH_RNA-bd_sf"/>
</dbReference>
<dbReference type="InterPro" id="IPR020568">
    <property type="entry name" value="Ribosomal_Su5_D2-typ_SF"/>
</dbReference>
<dbReference type="InterPro" id="IPR003029">
    <property type="entry name" value="S1_domain"/>
</dbReference>
<dbReference type="NCBIfam" id="TIGR03591">
    <property type="entry name" value="polynuc_phos"/>
    <property type="match status" value="1"/>
</dbReference>
<dbReference type="NCBIfam" id="NF008805">
    <property type="entry name" value="PRK11824.1"/>
    <property type="match status" value="1"/>
</dbReference>
<dbReference type="PANTHER" id="PTHR11252">
    <property type="entry name" value="POLYRIBONUCLEOTIDE NUCLEOTIDYLTRANSFERASE"/>
    <property type="match status" value="1"/>
</dbReference>
<dbReference type="PANTHER" id="PTHR11252:SF0">
    <property type="entry name" value="POLYRIBONUCLEOTIDE NUCLEOTIDYLTRANSFERASE 1, MITOCHONDRIAL"/>
    <property type="match status" value="1"/>
</dbReference>
<dbReference type="Pfam" id="PF00013">
    <property type="entry name" value="KH_1"/>
    <property type="match status" value="1"/>
</dbReference>
<dbReference type="Pfam" id="PF03726">
    <property type="entry name" value="PNPase"/>
    <property type="match status" value="1"/>
</dbReference>
<dbReference type="Pfam" id="PF01138">
    <property type="entry name" value="RNase_PH"/>
    <property type="match status" value="2"/>
</dbReference>
<dbReference type="Pfam" id="PF03725">
    <property type="entry name" value="RNase_PH_C"/>
    <property type="match status" value="1"/>
</dbReference>
<dbReference type="Pfam" id="PF00575">
    <property type="entry name" value="S1"/>
    <property type="match status" value="1"/>
</dbReference>
<dbReference type="PIRSF" id="PIRSF005499">
    <property type="entry name" value="PNPase"/>
    <property type="match status" value="1"/>
</dbReference>
<dbReference type="SMART" id="SM00322">
    <property type="entry name" value="KH"/>
    <property type="match status" value="1"/>
</dbReference>
<dbReference type="SMART" id="SM00316">
    <property type="entry name" value="S1"/>
    <property type="match status" value="1"/>
</dbReference>
<dbReference type="SUPFAM" id="SSF54791">
    <property type="entry name" value="Eukaryotic type KH-domain (KH-domain type I)"/>
    <property type="match status" value="1"/>
</dbReference>
<dbReference type="SUPFAM" id="SSF50249">
    <property type="entry name" value="Nucleic acid-binding proteins"/>
    <property type="match status" value="1"/>
</dbReference>
<dbReference type="SUPFAM" id="SSF46915">
    <property type="entry name" value="Polynucleotide phosphorylase/guanosine pentaphosphate synthase (PNPase/GPSI), domain 3"/>
    <property type="match status" value="1"/>
</dbReference>
<dbReference type="SUPFAM" id="SSF55666">
    <property type="entry name" value="Ribonuclease PH domain 2-like"/>
    <property type="match status" value="2"/>
</dbReference>
<dbReference type="SUPFAM" id="SSF54211">
    <property type="entry name" value="Ribosomal protein S5 domain 2-like"/>
    <property type="match status" value="2"/>
</dbReference>
<dbReference type="PROSITE" id="PS50084">
    <property type="entry name" value="KH_TYPE_1"/>
    <property type="match status" value="1"/>
</dbReference>
<dbReference type="PROSITE" id="PS50126">
    <property type="entry name" value="S1"/>
    <property type="match status" value="1"/>
</dbReference>
<organism>
    <name type="scientific">Nitrobacter winogradskyi (strain ATCC 25391 / DSM 10237 / CIP 104748 / NCIMB 11846 / Nb-255)</name>
    <dbReference type="NCBI Taxonomy" id="323098"/>
    <lineage>
        <taxon>Bacteria</taxon>
        <taxon>Pseudomonadati</taxon>
        <taxon>Pseudomonadota</taxon>
        <taxon>Alphaproteobacteria</taxon>
        <taxon>Hyphomicrobiales</taxon>
        <taxon>Nitrobacteraceae</taxon>
        <taxon>Nitrobacter</taxon>
    </lineage>
</organism>
<comment type="function">
    <text evidence="1">Involved in mRNA degradation. Catalyzes the phosphorolysis of single-stranded polyribonucleotides processively in the 3'- to 5'-direction.</text>
</comment>
<comment type="catalytic activity">
    <reaction evidence="1">
        <text>RNA(n+1) + phosphate = RNA(n) + a ribonucleoside 5'-diphosphate</text>
        <dbReference type="Rhea" id="RHEA:22096"/>
        <dbReference type="Rhea" id="RHEA-COMP:14527"/>
        <dbReference type="Rhea" id="RHEA-COMP:17342"/>
        <dbReference type="ChEBI" id="CHEBI:43474"/>
        <dbReference type="ChEBI" id="CHEBI:57930"/>
        <dbReference type="ChEBI" id="CHEBI:140395"/>
        <dbReference type="EC" id="2.7.7.8"/>
    </reaction>
</comment>
<comment type="cofactor">
    <cofactor evidence="1">
        <name>Mg(2+)</name>
        <dbReference type="ChEBI" id="CHEBI:18420"/>
    </cofactor>
</comment>
<comment type="subcellular location">
    <subcellularLocation>
        <location evidence="1">Cytoplasm</location>
    </subcellularLocation>
</comment>
<comment type="similarity">
    <text evidence="1">Belongs to the polyribonucleotide nucleotidyltransferase family.</text>
</comment>